<protein>
    <recommendedName>
        <fullName evidence="1">3-isopropylmalate dehydratase large subunit</fullName>
        <ecNumber evidence="1">4.2.1.33</ecNumber>
    </recommendedName>
    <alternativeName>
        <fullName evidence="1">Alpha-IPM isomerase</fullName>
        <shortName evidence="1">IPMI</shortName>
    </alternativeName>
    <alternativeName>
        <fullName evidence="1">Isopropylmalate isomerase</fullName>
    </alternativeName>
</protein>
<organism>
    <name type="scientific">Buchnera aphidicola subsp. Macrosiphoniella ludovicianae</name>
    <dbReference type="NCBI Taxonomy" id="118105"/>
    <lineage>
        <taxon>Bacteria</taxon>
        <taxon>Pseudomonadati</taxon>
        <taxon>Pseudomonadota</taxon>
        <taxon>Gammaproteobacteria</taxon>
        <taxon>Enterobacterales</taxon>
        <taxon>Erwiniaceae</taxon>
        <taxon>Buchnera</taxon>
    </lineage>
</organism>
<reference key="1">
    <citation type="journal article" date="2001" name="J. Bacteriol.">
        <title>Vertical transmission of biosynthetic plasmids in aphid endosymbionts (Buchnera).</title>
        <authorList>
            <person name="Wernegreen J.J."/>
            <person name="Moran N.A."/>
        </authorList>
    </citation>
    <scope>NUCLEOTIDE SEQUENCE [GENOMIC DNA]</scope>
</reference>
<accession>Q9EVG2</accession>
<feature type="chain" id="PRO_0000076718" description="3-isopropylmalate dehydratase large subunit">
    <location>
        <begin position="1"/>
        <end position="442" status="greater than"/>
    </location>
</feature>
<feature type="binding site" evidence="1">
    <location>
        <position position="347"/>
    </location>
    <ligand>
        <name>[4Fe-4S] cluster</name>
        <dbReference type="ChEBI" id="CHEBI:49883"/>
    </ligand>
</feature>
<feature type="binding site" evidence="1">
    <location>
        <position position="407"/>
    </location>
    <ligand>
        <name>[4Fe-4S] cluster</name>
        <dbReference type="ChEBI" id="CHEBI:49883"/>
    </ligand>
</feature>
<feature type="binding site" evidence="1">
    <location>
        <position position="410"/>
    </location>
    <ligand>
        <name>[4Fe-4S] cluster</name>
        <dbReference type="ChEBI" id="CHEBI:49883"/>
    </ligand>
</feature>
<feature type="non-terminal residue">
    <location>
        <position position="442"/>
    </location>
</feature>
<gene>
    <name evidence="1" type="primary">leuC</name>
</gene>
<sequence>MNKTLYQKIYDSHIIHEEKNNTSILYIDLHLLHEVTSPQAFYSLRQKRRMVRQPKKTFATMDHNVSTHNRDINGSGSMAKIQMEQLRKNCDEFNISLYDINNPNQGIVHVIAPEKGMTLPGMTIVCGDSHTSTHGAFGALSFGIGTSEVEHVLATQTLKQQRFKNMKIEIIGQIPKFISAKDIILFIIGKXGSSIGSGYVVEFCGNVIETMSMEERMTICNMAIEMGAKSGLIAPDKTTYAYLKNKIYSPYGVFWEKSLDFWQTLKSDKDAFFDKIFTIDISNLAPQITWGTNPDQVISIDEKIPNYETFSSLTQRNLAKSACKYMGLKKESYLTNISIDKVFIGSXTNARIEDLRLAAKILKNKKISNNVQAIVVPGSGSVKRQAEREGLDKIFINAGFEWRLPGCSMCLGMNRDRLNVGERCASXSNRNFEGRQGRGGRT</sequence>
<keyword id="KW-0004">4Fe-4S</keyword>
<keyword id="KW-0028">Amino-acid biosynthesis</keyword>
<keyword id="KW-0100">Branched-chain amino acid biosynthesis</keyword>
<keyword id="KW-0408">Iron</keyword>
<keyword id="KW-0411">Iron-sulfur</keyword>
<keyword id="KW-0432">Leucine biosynthesis</keyword>
<keyword id="KW-0456">Lyase</keyword>
<keyword id="KW-0479">Metal-binding</keyword>
<keyword id="KW-0614">Plasmid</keyword>
<dbReference type="EC" id="4.2.1.33" evidence="1"/>
<dbReference type="EMBL" id="AF197456">
    <property type="protein sequence ID" value="AAG31403.1"/>
    <property type="molecule type" value="Genomic_DNA"/>
</dbReference>
<dbReference type="UniPathway" id="UPA00048">
    <property type="reaction ID" value="UER00071"/>
</dbReference>
<dbReference type="GO" id="GO:0003861">
    <property type="term" value="F:3-isopropylmalate dehydratase activity"/>
    <property type="evidence" value="ECO:0007669"/>
    <property type="project" value="UniProtKB-EC"/>
</dbReference>
<dbReference type="GO" id="GO:0051539">
    <property type="term" value="F:4 iron, 4 sulfur cluster binding"/>
    <property type="evidence" value="ECO:0007669"/>
    <property type="project" value="UniProtKB-KW"/>
</dbReference>
<dbReference type="GO" id="GO:0046872">
    <property type="term" value="F:metal ion binding"/>
    <property type="evidence" value="ECO:0007669"/>
    <property type="project" value="UniProtKB-KW"/>
</dbReference>
<dbReference type="GO" id="GO:0009098">
    <property type="term" value="P:L-leucine biosynthetic process"/>
    <property type="evidence" value="ECO:0007669"/>
    <property type="project" value="UniProtKB-UniPathway"/>
</dbReference>
<dbReference type="CDD" id="cd01583">
    <property type="entry name" value="IPMI"/>
    <property type="match status" value="1"/>
</dbReference>
<dbReference type="Gene3D" id="3.30.499.10">
    <property type="entry name" value="Aconitase, domain 3"/>
    <property type="match status" value="2"/>
</dbReference>
<dbReference type="HAMAP" id="MF_01026">
    <property type="entry name" value="LeuC_type1"/>
    <property type="match status" value="1"/>
</dbReference>
<dbReference type="InterPro" id="IPR004430">
    <property type="entry name" value="3-IsopropMal_deHydase_lsu"/>
</dbReference>
<dbReference type="InterPro" id="IPR015931">
    <property type="entry name" value="Acnase/IPM_dHydase_lsu_aba_1/3"/>
</dbReference>
<dbReference type="InterPro" id="IPR001030">
    <property type="entry name" value="Acoase/IPM_deHydtase_lsu_aba"/>
</dbReference>
<dbReference type="InterPro" id="IPR018136">
    <property type="entry name" value="Aconitase_4Fe-4S_BS"/>
</dbReference>
<dbReference type="InterPro" id="IPR036008">
    <property type="entry name" value="Aconitase_4Fe-4S_dom"/>
</dbReference>
<dbReference type="InterPro" id="IPR050067">
    <property type="entry name" value="IPM_dehydratase_rel_enz"/>
</dbReference>
<dbReference type="InterPro" id="IPR033941">
    <property type="entry name" value="IPMI_cat"/>
</dbReference>
<dbReference type="NCBIfam" id="TIGR00170">
    <property type="entry name" value="leuC"/>
    <property type="match status" value="1"/>
</dbReference>
<dbReference type="NCBIfam" id="NF004016">
    <property type="entry name" value="PRK05478.1"/>
    <property type="match status" value="1"/>
</dbReference>
<dbReference type="NCBIfam" id="NF009116">
    <property type="entry name" value="PRK12466.1"/>
    <property type="match status" value="1"/>
</dbReference>
<dbReference type="PANTHER" id="PTHR43822:SF9">
    <property type="entry name" value="3-ISOPROPYLMALATE DEHYDRATASE"/>
    <property type="match status" value="1"/>
</dbReference>
<dbReference type="PANTHER" id="PTHR43822">
    <property type="entry name" value="HOMOACONITASE, MITOCHONDRIAL-RELATED"/>
    <property type="match status" value="1"/>
</dbReference>
<dbReference type="Pfam" id="PF00330">
    <property type="entry name" value="Aconitase"/>
    <property type="match status" value="1"/>
</dbReference>
<dbReference type="PRINTS" id="PR00415">
    <property type="entry name" value="ACONITASE"/>
</dbReference>
<dbReference type="SUPFAM" id="SSF53732">
    <property type="entry name" value="Aconitase iron-sulfur domain"/>
    <property type="match status" value="1"/>
</dbReference>
<dbReference type="PROSITE" id="PS00450">
    <property type="entry name" value="ACONITASE_1"/>
    <property type="match status" value="1"/>
</dbReference>
<dbReference type="PROSITE" id="PS01244">
    <property type="entry name" value="ACONITASE_2"/>
    <property type="match status" value="1"/>
</dbReference>
<geneLocation type="plasmid">
    <name>pLeu</name>
    <name>pBAp1</name>
</geneLocation>
<evidence type="ECO:0000255" key="1">
    <source>
        <dbReference type="HAMAP-Rule" id="MF_01026"/>
    </source>
</evidence>
<name>LEUC_BUCML</name>
<comment type="function">
    <text evidence="1">Catalyzes the isomerization between 2-isopropylmalate and 3-isopropylmalate, via the formation of 2-isopropylmaleate.</text>
</comment>
<comment type="catalytic activity">
    <reaction evidence="1">
        <text>(2R,3S)-3-isopropylmalate = (2S)-2-isopropylmalate</text>
        <dbReference type="Rhea" id="RHEA:32287"/>
        <dbReference type="ChEBI" id="CHEBI:1178"/>
        <dbReference type="ChEBI" id="CHEBI:35121"/>
        <dbReference type="EC" id="4.2.1.33"/>
    </reaction>
</comment>
<comment type="cofactor">
    <cofactor evidence="1">
        <name>[4Fe-4S] cluster</name>
        <dbReference type="ChEBI" id="CHEBI:49883"/>
    </cofactor>
    <text evidence="1">Binds 1 [4Fe-4S] cluster per subunit.</text>
</comment>
<comment type="pathway">
    <text evidence="1">Amino-acid biosynthesis; L-leucine biosynthesis; L-leucine from 3-methyl-2-oxobutanoate: step 2/4.</text>
</comment>
<comment type="subunit">
    <text evidence="1">Heterodimer of LeuC and LeuD.</text>
</comment>
<comment type="similarity">
    <text evidence="1">Belongs to the aconitase/IPM isomerase family. LeuC type 1 subfamily.</text>
</comment>
<proteinExistence type="inferred from homology"/>